<protein>
    <recommendedName>
        <fullName evidence="1">tRNA dimethylallyltransferase</fullName>
        <ecNumber evidence="1">2.5.1.75</ecNumber>
    </recommendedName>
    <alternativeName>
        <fullName evidence="1">Dimethylallyl diphosphate:tRNA dimethylallyltransferase</fullName>
        <shortName evidence="1">DMAPP:tRNA dimethylallyltransferase</shortName>
        <shortName evidence="1">DMATase</shortName>
    </alternativeName>
    <alternativeName>
        <fullName evidence="1">Isopentenyl-diphosphate:tRNA isopentenyltransferase</fullName>
        <shortName evidence="1">IPP transferase</shortName>
        <shortName evidence="1">IPPT</shortName>
        <shortName evidence="1">IPTase</shortName>
    </alternativeName>
</protein>
<proteinExistence type="inferred from homology"/>
<sequence length="312" mass="35168">MSLSKQPVIVIVGPTAVGKTKTGIELAKKLNGEIISGDSVQVYKQMDIGSAKVTQEEMEGIPHHLLDLVDPDDEMSVARFQTLARTAIDEIAAKGKLPIIVGGTGLYIRAILYDYQFTVQAENKVLREELEQFAQAEGATALHDRLRQLDAKRADEIHPNNIQRVVRAIEVAMSGQTQVSGSEPSLYDSLLFVLHMEDREQLYDRIDQRVDLMIEQGLVAEVDRLVAAGYRDTKAMQAIGYKEIVPVLEGAPLEPAVEQLKRNTRRFAKRQLTWFRHQFDGNWIEMGRLSFEENFKIIYDRTVGFLKAVKSE</sequence>
<keyword id="KW-0067">ATP-binding</keyword>
<keyword id="KW-0460">Magnesium</keyword>
<keyword id="KW-0547">Nucleotide-binding</keyword>
<keyword id="KW-1185">Reference proteome</keyword>
<keyword id="KW-0808">Transferase</keyword>
<keyword id="KW-0819">tRNA processing</keyword>
<comment type="function">
    <text evidence="1">Catalyzes the transfer of a dimethylallyl group onto the adenine at position 37 in tRNAs that read codons beginning with uridine, leading to the formation of N6-(dimethylallyl)adenosine (i(6)A).</text>
</comment>
<comment type="catalytic activity">
    <reaction evidence="1">
        <text>adenosine(37) in tRNA + dimethylallyl diphosphate = N(6)-dimethylallyladenosine(37) in tRNA + diphosphate</text>
        <dbReference type="Rhea" id="RHEA:26482"/>
        <dbReference type="Rhea" id="RHEA-COMP:10162"/>
        <dbReference type="Rhea" id="RHEA-COMP:10375"/>
        <dbReference type="ChEBI" id="CHEBI:33019"/>
        <dbReference type="ChEBI" id="CHEBI:57623"/>
        <dbReference type="ChEBI" id="CHEBI:74411"/>
        <dbReference type="ChEBI" id="CHEBI:74415"/>
        <dbReference type="EC" id="2.5.1.75"/>
    </reaction>
</comment>
<comment type="cofactor">
    <cofactor evidence="1">
        <name>Mg(2+)</name>
        <dbReference type="ChEBI" id="CHEBI:18420"/>
    </cofactor>
</comment>
<comment type="subunit">
    <text evidence="1">Monomer.</text>
</comment>
<comment type="similarity">
    <text evidence="1">Belongs to the IPP transferase family.</text>
</comment>
<accession>B1YMH0</accession>
<name>MIAA_EXIS2</name>
<dbReference type="EC" id="2.5.1.75" evidence="1"/>
<dbReference type="EMBL" id="CP001022">
    <property type="protein sequence ID" value="ACB60557.1"/>
    <property type="molecule type" value="Genomic_DNA"/>
</dbReference>
<dbReference type="RefSeq" id="WP_012369980.1">
    <property type="nucleotide sequence ID" value="NC_010556.1"/>
</dbReference>
<dbReference type="SMR" id="B1YMH0"/>
<dbReference type="STRING" id="262543.Exig_1077"/>
<dbReference type="KEGG" id="esi:Exig_1077"/>
<dbReference type="eggNOG" id="COG0324">
    <property type="taxonomic scope" value="Bacteria"/>
</dbReference>
<dbReference type="HOGENOM" id="CLU_032616_0_1_9"/>
<dbReference type="OrthoDB" id="9776390at2"/>
<dbReference type="Proteomes" id="UP000001681">
    <property type="component" value="Chromosome"/>
</dbReference>
<dbReference type="GO" id="GO:0005524">
    <property type="term" value="F:ATP binding"/>
    <property type="evidence" value="ECO:0007669"/>
    <property type="project" value="UniProtKB-UniRule"/>
</dbReference>
<dbReference type="GO" id="GO:0052381">
    <property type="term" value="F:tRNA dimethylallyltransferase activity"/>
    <property type="evidence" value="ECO:0007669"/>
    <property type="project" value="UniProtKB-UniRule"/>
</dbReference>
<dbReference type="GO" id="GO:0006400">
    <property type="term" value="P:tRNA modification"/>
    <property type="evidence" value="ECO:0007669"/>
    <property type="project" value="TreeGrafter"/>
</dbReference>
<dbReference type="Gene3D" id="1.10.20.140">
    <property type="match status" value="1"/>
</dbReference>
<dbReference type="Gene3D" id="3.40.50.300">
    <property type="entry name" value="P-loop containing nucleotide triphosphate hydrolases"/>
    <property type="match status" value="1"/>
</dbReference>
<dbReference type="HAMAP" id="MF_00185">
    <property type="entry name" value="IPP_trans"/>
    <property type="match status" value="1"/>
</dbReference>
<dbReference type="InterPro" id="IPR039657">
    <property type="entry name" value="Dimethylallyltransferase"/>
</dbReference>
<dbReference type="InterPro" id="IPR018022">
    <property type="entry name" value="IPT"/>
</dbReference>
<dbReference type="InterPro" id="IPR027417">
    <property type="entry name" value="P-loop_NTPase"/>
</dbReference>
<dbReference type="NCBIfam" id="TIGR00174">
    <property type="entry name" value="miaA"/>
    <property type="match status" value="1"/>
</dbReference>
<dbReference type="PANTHER" id="PTHR11088">
    <property type="entry name" value="TRNA DIMETHYLALLYLTRANSFERASE"/>
    <property type="match status" value="1"/>
</dbReference>
<dbReference type="PANTHER" id="PTHR11088:SF60">
    <property type="entry name" value="TRNA DIMETHYLALLYLTRANSFERASE"/>
    <property type="match status" value="1"/>
</dbReference>
<dbReference type="Pfam" id="PF01715">
    <property type="entry name" value="IPPT"/>
    <property type="match status" value="1"/>
</dbReference>
<dbReference type="SUPFAM" id="SSF52540">
    <property type="entry name" value="P-loop containing nucleoside triphosphate hydrolases"/>
    <property type="match status" value="1"/>
</dbReference>
<evidence type="ECO:0000255" key="1">
    <source>
        <dbReference type="HAMAP-Rule" id="MF_00185"/>
    </source>
</evidence>
<gene>
    <name evidence="1" type="primary">miaA</name>
    <name type="ordered locus">Exig_1077</name>
</gene>
<reference key="1">
    <citation type="submission" date="2008-04" db="EMBL/GenBank/DDBJ databases">
        <title>Complete sequence of chromosome of Exiguobacterium sibiricum 255-15.</title>
        <authorList>
            <consortium name="US DOE Joint Genome Institute"/>
            <person name="Copeland A."/>
            <person name="Lucas S."/>
            <person name="Lapidus A."/>
            <person name="Glavina del Rio T."/>
            <person name="Dalin E."/>
            <person name="Tice H."/>
            <person name="Bruce D."/>
            <person name="Goodwin L."/>
            <person name="Pitluck S."/>
            <person name="Kiss H."/>
            <person name="Chertkov O."/>
            <person name="Monk C."/>
            <person name="Brettin T."/>
            <person name="Detter J.C."/>
            <person name="Han C."/>
            <person name="Kuske C.R."/>
            <person name="Schmutz J."/>
            <person name="Larimer F."/>
            <person name="Land M."/>
            <person name="Hauser L."/>
            <person name="Kyrpides N."/>
            <person name="Mikhailova N."/>
            <person name="Vishnivetskaya T."/>
            <person name="Rodrigues D.F."/>
            <person name="Gilichinsky D."/>
            <person name="Tiedje J."/>
            <person name="Richardson P."/>
        </authorList>
    </citation>
    <scope>NUCLEOTIDE SEQUENCE [LARGE SCALE GENOMIC DNA]</scope>
    <source>
        <strain>DSM 17290 / CCUG 55495 / CIP 109462 / JCM 13490 / 255-15</strain>
    </source>
</reference>
<organism>
    <name type="scientific">Exiguobacterium sibiricum (strain DSM 17290 / CCUG 55495 / CIP 109462 / JCM 13490 / 255-15)</name>
    <dbReference type="NCBI Taxonomy" id="262543"/>
    <lineage>
        <taxon>Bacteria</taxon>
        <taxon>Bacillati</taxon>
        <taxon>Bacillota</taxon>
        <taxon>Bacilli</taxon>
        <taxon>Bacillales</taxon>
        <taxon>Bacillales Family XII. Incertae Sedis</taxon>
        <taxon>Exiguobacterium</taxon>
    </lineage>
</organism>
<feature type="chain" id="PRO_0000377160" description="tRNA dimethylallyltransferase">
    <location>
        <begin position="1"/>
        <end position="312"/>
    </location>
</feature>
<feature type="region of interest" description="Interaction with substrate tRNA" evidence="1">
    <location>
        <begin position="38"/>
        <end position="41"/>
    </location>
</feature>
<feature type="region of interest" description="Interaction with substrate tRNA" evidence="1">
    <location>
        <begin position="163"/>
        <end position="167"/>
    </location>
</feature>
<feature type="binding site" evidence="1">
    <location>
        <begin position="13"/>
        <end position="20"/>
    </location>
    <ligand>
        <name>ATP</name>
        <dbReference type="ChEBI" id="CHEBI:30616"/>
    </ligand>
</feature>
<feature type="binding site" evidence="1">
    <location>
        <begin position="15"/>
        <end position="20"/>
    </location>
    <ligand>
        <name>substrate</name>
    </ligand>
</feature>
<feature type="site" description="Interaction with substrate tRNA" evidence="1">
    <location>
        <position position="104"/>
    </location>
</feature>
<feature type="site" description="Interaction with substrate tRNA" evidence="1">
    <location>
        <position position="127"/>
    </location>
</feature>